<protein>
    <recommendedName>
        <fullName evidence="1">Glutamyl-tRNA(Gln) amidotransferase subunit A</fullName>
        <shortName evidence="1">Glu-ADT subunit A</shortName>
        <ecNumber evidence="1">6.3.5.7</ecNumber>
    </recommendedName>
</protein>
<name>GATA_BRADU</name>
<feature type="chain" id="PRO_0000105144" description="Glutamyl-tRNA(Gln) amidotransferase subunit A">
    <location>
        <begin position="1"/>
        <end position="491"/>
    </location>
</feature>
<feature type="active site" description="Charge relay system" evidence="1">
    <location>
        <position position="158"/>
    </location>
</feature>
<feature type="active site" description="Acyl-ester intermediate" evidence="1">
    <location>
        <position position="182"/>
    </location>
</feature>
<organism>
    <name type="scientific">Bradyrhizobium diazoefficiens (strain JCM 10833 / BCRC 13528 / IAM 13628 / NBRC 14792 / USDA 110)</name>
    <dbReference type="NCBI Taxonomy" id="224911"/>
    <lineage>
        <taxon>Bacteria</taxon>
        <taxon>Pseudomonadati</taxon>
        <taxon>Pseudomonadota</taxon>
        <taxon>Alphaproteobacteria</taxon>
        <taxon>Hyphomicrobiales</taxon>
        <taxon>Nitrobacteraceae</taxon>
        <taxon>Bradyrhizobium</taxon>
    </lineage>
</organism>
<keyword id="KW-0067">ATP-binding</keyword>
<keyword id="KW-0436">Ligase</keyword>
<keyword id="KW-0547">Nucleotide-binding</keyword>
<keyword id="KW-0648">Protein biosynthesis</keyword>
<keyword id="KW-1185">Reference proteome</keyword>
<accession>Q89K29</accession>
<dbReference type="EC" id="6.3.5.7" evidence="1"/>
<dbReference type="EMBL" id="BA000040">
    <property type="protein sequence ID" value="BAC50354.1"/>
    <property type="molecule type" value="Genomic_DNA"/>
</dbReference>
<dbReference type="RefSeq" id="NP_771729.1">
    <property type="nucleotide sequence ID" value="NC_004463.1"/>
</dbReference>
<dbReference type="RefSeq" id="WP_011087849.1">
    <property type="nucleotide sequence ID" value="NC_004463.1"/>
</dbReference>
<dbReference type="SMR" id="Q89K29"/>
<dbReference type="STRING" id="224911.AAV28_22805"/>
<dbReference type="EnsemblBacteria" id="BAC50354">
    <property type="protein sequence ID" value="BAC50354"/>
    <property type="gene ID" value="BAC50354"/>
</dbReference>
<dbReference type="KEGG" id="bja:bll5089"/>
<dbReference type="PATRIC" id="fig|224911.5.peg.5166"/>
<dbReference type="eggNOG" id="COG0154">
    <property type="taxonomic scope" value="Bacteria"/>
</dbReference>
<dbReference type="HOGENOM" id="CLU_009600_0_3_5"/>
<dbReference type="InParanoid" id="Q89K29"/>
<dbReference type="OrthoDB" id="9811471at2"/>
<dbReference type="PhylomeDB" id="Q89K29"/>
<dbReference type="Proteomes" id="UP000002526">
    <property type="component" value="Chromosome"/>
</dbReference>
<dbReference type="GO" id="GO:0030956">
    <property type="term" value="C:glutamyl-tRNA(Gln) amidotransferase complex"/>
    <property type="evidence" value="ECO:0007669"/>
    <property type="project" value="InterPro"/>
</dbReference>
<dbReference type="GO" id="GO:0005524">
    <property type="term" value="F:ATP binding"/>
    <property type="evidence" value="ECO:0007669"/>
    <property type="project" value="UniProtKB-KW"/>
</dbReference>
<dbReference type="GO" id="GO:0050567">
    <property type="term" value="F:glutaminyl-tRNA synthase (glutamine-hydrolyzing) activity"/>
    <property type="evidence" value="ECO:0007669"/>
    <property type="project" value="UniProtKB-UniRule"/>
</dbReference>
<dbReference type="GO" id="GO:0006412">
    <property type="term" value="P:translation"/>
    <property type="evidence" value="ECO:0007669"/>
    <property type="project" value="UniProtKB-UniRule"/>
</dbReference>
<dbReference type="Gene3D" id="3.90.1300.10">
    <property type="entry name" value="Amidase signature (AS) domain"/>
    <property type="match status" value="1"/>
</dbReference>
<dbReference type="HAMAP" id="MF_00120">
    <property type="entry name" value="GatA"/>
    <property type="match status" value="1"/>
</dbReference>
<dbReference type="InterPro" id="IPR000120">
    <property type="entry name" value="Amidase"/>
</dbReference>
<dbReference type="InterPro" id="IPR020556">
    <property type="entry name" value="Amidase_CS"/>
</dbReference>
<dbReference type="InterPro" id="IPR023631">
    <property type="entry name" value="Amidase_dom"/>
</dbReference>
<dbReference type="InterPro" id="IPR036928">
    <property type="entry name" value="AS_sf"/>
</dbReference>
<dbReference type="InterPro" id="IPR004412">
    <property type="entry name" value="GatA"/>
</dbReference>
<dbReference type="NCBIfam" id="TIGR00132">
    <property type="entry name" value="gatA"/>
    <property type="match status" value="1"/>
</dbReference>
<dbReference type="PANTHER" id="PTHR11895:SF151">
    <property type="entry name" value="GLUTAMYL-TRNA(GLN) AMIDOTRANSFERASE SUBUNIT A"/>
    <property type="match status" value="1"/>
</dbReference>
<dbReference type="PANTHER" id="PTHR11895">
    <property type="entry name" value="TRANSAMIDASE"/>
    <property type="match status" value="1"/>
</dbReference>
<dbReference type="Pfam" id="PF01425">
    <property type="entry name" value="Amidase"/>
    <property type="match status" value="1"/>
</dbReference>
<dbReference type="SUPFAM" id="SSF75304">
    <property type="entry name" value="Amidase signature (AS) enzymes"/>
    <property type="match status" value="1"/>
</dbReference>
<dbReference type="PROSITE" id="PS00571">
    <property type="entry name" value="AMIDASES"/>
    <property type="match status" value="1"/>
</dbReference>
<sequence length="491" mass="52173">MTDLTSLTLAEARKGLAAKTFTSLELTDAHLSAIEAARVLNAFVMETPDRARDMAREADGKIAKGDAGPLAGIPLGMTDLFATKGVRTTACSKILGNFVPTYESTVTSQLWRDGAVMLGKLNNDEFAMGSANETSCFGPVGNPWRREGSNTTLVPGGSSGGSASAVAALLCMGATATDTGGSIRQPAAFTATVGIKPTYGRCSRWGIVAFASSLDQAGPIARSVRDSAMLLRSMAGHDPKDTTSVDIPVPDYEAAIGKSVKGIRIGIPKEYRLDGMPAEIEKLWSEGAAWLKAAGAELVEVSLPHTKYALPAYYIVAPAEASSNLARYDGVRYGLREQGKNIIELYENTRAEGFGAEVRRRVMIGTYVLSAGYYDAYYLRAQKVRTLIKKDFEDCFAKGVNAILTPATPSAAFGIGEKGGADPVEMYLNDIFTVTVNMAGLPGIAVPAGKDAQGLPLGLQLIGRPFDEETLFSLGEVIEQAAGRFTPARWW</sequence>
<proteinExistence type="inferred from homology"/>
<evidence type="ECO:0000255" key="1">
    <source>
        <dbReference type="HAMAP-Rule" id="MF_00120"/>
    </source>
</evidence>
<gene>
    <name evidence="1" type="primary">gatA</name>
    <name type="ordered locus">bll5089</name>
</gene>
<comment type="function">
    <text evidence="1">Allows the formation of correctly charged Gln-tRNA(Gln) through the transamidation of misacylated Glu-tRNA(Gln) in organisms which lack glutaminyl-tRNA synthetase. The reaction takes place in the presence of glutamine and ATP through an activated gamma-phospho-Glu-tRNA(Gln).</text>
</comment>
<comment type="catalytic activity">
    <reaction evidence="1">
        <text>L-glutamyl-tRNA(Gln) + L-glutamine + ATP + H2O = L-glutaminyl-tRNA(Gln) + L-glutamate + ADP + phosphate + H(+)</text>
        <dbReference type="Rhea" id="RHEA:17521"/>
        <dbReference type="Rhea" id="RHEA-COMP:9681"/>
        <dbReference type="Rhea" id="RHEA-COMP:9684"/>
        <dbReference type="ChEBI" id="CHEBI:15377"/>
        <dbReference type="ChEBI" id="CHEBI:15378"/>
        <dbReference type="ChEBI" id="CHEBI:29985"/>
        <dbReference type="ChEBI" id="CHEBI:30616"/>
        <dbReference type="ChEBI" id="CHEBI:43474"/>
        <dbReference type="ChEBI" id="CHEBI:58359"/>
        <dbReference type="ChEBI" id="CHEBI:78520"/>
        <dbReference type="ChEBI" id="CHEBI:78521"/>
        <dbReference type="ChEBI" id="CHEBI:456216"/>
        <dbReference type="EC" id="6.3.5.7"/>
    </reaction>
</comment>
<comment type="subunit">
    <text evidence="1">Heterotrimer of A, B and C subunits.</text>
</comment>
<comment type="similarity">
    <text evidence="1">Belongs to the amidase family. GatA subfamily.</text>
</comment>
<reference key="1">
    <citation type="journal article" date="2002" name="DNA Res.">
        <title>Complete genomic sequence of nitrogen-fixing symbiotic bacterium Bradyrhizobium japonicum USDA110.</title>
        <authorList>
            <person name="Kaneko T."/>
            <person name="Nakamura Y."/>
            <person name="Sato S."/>
            <person name="Minamisawa K."/>
            <person name="Uchiumi T."/>
            <person name="Sasamoto S."/>
            <person name="Watanabe A."/>
            <person name="Idesawa K."/>
            <person name="Iriguchi M."/>
            <person name="Kawashima K."/>
            <person name="Kohara M."/>
            <person name="Matsumoto M."/>
            <person name="Shimpo S."/>
            <person name="Tsuruoka H."/>
            <person name="Wada T."/>
            <person name="Yamada M."/>
            <person name="Tabata S."/>
        </authorList>
    </citation>
    <scope>NUCLEOTIDE SEQUENCE [LARGE SCALE GENOMIC DNA]</scope>
    <source>
        <strain>JCM 10833 / BCRC 13528 / IAM 13628 / NBRC 14792 / USDA 110</strain>
    </source>
</reference>